<evidence type="ECO:0000250" key="1"/>
<evidence type="ECO:0000255" key="2"/>
<evidence type="ECO:0000255" key="3">
    <source>
        <dbReference type="PROSITE-ProRule" id="PRU00521"/>
    </source>
</evidence>
<evidence type="ECO:0000256" key="4">
    <source>
        <dbReference type="SAM" id="MobiDB-lite"/>
    </source>
</evidence>
<evidence type="ECO:0000305" key="5"/>
<evidence type="ECO:0007829" key="6">
    <source>
        <dbReference type="PDB" id="2PV9"/>
    </source>
</evidence>
<feature type="signal peptide" evidence="2">
    <location>
        <begin position="1"/>
        <end position="16"/>
    </location>
</feature>
<feature type="propeptide" id="PRO_0000012764" description="Removed for receptor activation" evidence="1">
    <location>
        <begin position="17"/>
        <end position="59"/>
    </location>
</feature>
<feature type="chain" id="PRO_0000012765" description="Proteinase-activated receptor 4">
    <location>
        <begin position="60"/>
        <end position="396"/>
    </location>
</feature>
<feature type="topological domain" description="Extracellular" evidence="2">
    <location>
        <begin position="60"/>
        <end position="94"/>
    </location>
</feature>
<feature type="transmembrane region" description="Helical; Name=1" evidence="2">
    <location>
        <begin position="95"/>
        <end position="115"/>
    </location>
</feature>
<feature type="topological domain" description="Cytoplasmic" evidence="2">
    <location>
        <begin position="116"/>
        <end position="120"/>
    </location>
</feature>
<feature type="transmembrane region" description="Helical; Name=2" evidence="2">
    <location>
        <begin position="121"/>
        <end position="141"/>
    </location>
</feature>
<feature type="topological domain" description="Extracellular" evidence="2">
    <location>
        <begin position="142"/>
        <end position="162"/>
    </location>
</feature>
<feature type="transmembrane region" description="Helical; Name=3" evidence="2">
    <location>
        <begin position="163"/>
        <end position="183"/>
    </location>
</feature>
<feature type="topological domain" description="Cytoplasmic" evidence="2">
    <location>
        <begin position="184"/>
        <end position="203"/>
    </location>
</feature>
<feature type="transmembrane region" description="Helical; Name=4" evidence="2">
    <location>
        <begin position="204"/>
        <end position="224"/>
    </location>
</feature>
<feature type="topological domain" description="Extracellular" evidence="2">
    <location>
        <begin position="225"/>
        <end position="255"/>
    </location>
</feature>
<feature type="transmembrane region" description="Helical; Name=5" evidence="2">
    <location>
        <begin position="256"/>
        <end position="276"/>
    </location>
</feature>
<feature type="topological domain" description="Cytoplasmic" evidence="2">
    <location>
        <begin position="277"/>
        <end position="295"/>
    </location>
</feature>
<feature type="transmembrane region" description="Helical; Name=6" evidence="2">
    <location>
        <begin position="296"/>
        <end position="316"/>
    </location>
</feature>
<feature type="topological domain" description="Extracellular" evidence="2">
    <location>
        <begin position="317"/>
        <end position="331"/>
    </location>
</feature>
<feature type="transmembrane region" description="Helical; Name=7" evidence="2">
    <location>
        <begin position="332"/>
        <end position="355"/>
    </location>
</feature>
<feature type="topological domain" description="Cytoplasmic" evidence="2">
    <location>
        <begin position="356"/>
        <end position="396"/>
    </location>
</feature>
<feature type="region of interest" description="Disordered" evidence="4">
    <location>
        <begin position="28"/>
        <end position="62"/>
    </location>
</feature>
<feature type="compositionally biased region" description="Basic and acidic residues" evidence="4">
    <location>
        <begin position="46"/>
        <end position="57"/>
    </location>
</feature>
<feature type="site" description="Cleavage; by thrombin" evidence="1">
    <location>
        <begin position="59"/>
        <end position="60"/>
    </location>
</feature>
<feature type="glycosylation site" description="N-linked (GlcNAc...) asparagine" evidence="2">
    <location>
        <position position="68"/>
    </location>
</feature>
<feature type="disulfide bond" evidence="3">
    <location>
        <begin position="161"/>
        <end position="240"/>
    </location>
</feature>
<feature type="sequence conflict" description="In Ref. 1; AAC28861." evidence="5" ref="1">
    <original>P</original>
    <variation>S</variation>
    <location>
        <position position="88"/>
    </location>
</feature>
<feature type="sequence conflict" description="In Ref. 1; AAC28861." evidence="5" ref="1">
    <original>M</original>
    <variation>T</variation>
    <location>
        <position position="128"/>
    </location>
</feature>
<feature type="sequence conflict" description="In Ref. 1; AAC28861." evidence="5" ref="1">
    <original>L</original>
    <variation>S</variation>
    <location>
        <position position="135"/>
    </location>
</feature>
<feature type="sequence conflict" description="In Ref. 1; AAC28861." evidence="5" ref="1">
    <original>L</original>
    <variation>P</variation>
    <location>
        <position position="141"/>
    </location>
</feature>
<feature type="turn" evidence="6">
    <location>
        <begin position="62"/>
        <end position="65"/>
    </location>
</feature>
<sequence>MCWPLLYPLVLGLSISLAEGIQTPSIYDDVESTRGSHEGPLGPTVELKEPKSSDKPNPRGYPGKFCANDSDTLELPASSQALLLGWVPTRLVPALYGLVVAVGLPANGLALWVLATRVPRLPSTILLMNLAVADLLLALVLPPRLAYHLRGQRWPFGEAACRVATAALYGHMYGSVLLLAAVSLDRYLALVHPLRARALRGQRLTTGLCLVAWLSAATLALPLTLHRQTFRLAGSDRMLCHDALPLTEQTSHWRPAFICLAVLGCFVPLLAMGLCYGATLRALAANGQRYSHALRLTALVLFSAVASFTPSNVLLVLHYSNPSPEAWGNLYGAYVPSLALSTLNSCVDPFIYYYVSHEFREKVRAMLCRQPEASSSSQASREAGSRGTAICSSTLL</sequence>
<proteinExistence type="evidence at protein level"/>
<keyword id="KW-0002">3D-structure</keyword>
<keyword id="KW-0094">Blood coagulation</keyword>
<keyword id="KW-1003">Cell membrane</keyword>
<keyword id="KW-1015">Disulfide bond</keyword>
<keyword id="KW-0297">G-protein coupled receptor</keyword>
<keyword id="KW-0325">Glycoprotein</keyword>
<keyword id="KW-0356">Hemostasis</keyword>
<keyword id="KW-0472">Membrane</keyword>
<keyword id="KW-0675">Receptor</keyword>
<keyword id="KW-1185">Reference proteome</keyword>
<keyword id="KW-0732">Signal</keyword>
<keyword id="KW-0807">Transducer</keyword>
<keyword id="KW-0812">Transmembrane</keyword>
<keyword id="KW-1133">Transmembrane helix</keyword>
<dbReference type="EMBL" id="AF080215">
    <property type="protein sequence ID" value="AAC28861.1"/>
    <property type="molecule type" value="mRNA"/>
</dbReference>
<dbReference type="EMBL" id="AK036427">
    <property type="protein sequence ID" value="BAC29423.1"/>
    <property type="molecule type" value="mRNA"/>
</dbReference>
<dbReference type="EMBL" id="AK153720">
    <property type="protein sequence ID" value="BAE32155.1"/>
    <property type="molecule type" value="mRNA"/>
</dbReference>
<dbReference type="EMBL" id="AK156729">
    <property type="protein sequence ID" value="BAE33823.1"/>
    <property type="molecule type" value="mRNA"/>
</dbReference>
<dbReference type="EMBL" id="CH466525">
    <property type="protein sequence ID" value="EDL10818.1"/>
    <property type="molecule type" value="Genomic_DNA"/>
</dbReference>
<dbReference type="CCDS" id="CCDS22419.1"/>
<dbReference type="RefSeq" id="NP_032001.2">
    <property type="nucleotide sequence ID" value="NM_007975.4"/>
</dbReference>
<dbReference type="PDB" id="2PV9">
    <property type="method" value="X-ray"/>
    <property type="resolution" value="3.50 A"/>
    <property type="chains" value="C=51-76"/>
</dbReference>
<dbReference type="PDBsum" id="2PV9"/>
<dbReference type="SMR" id="O88634"/>
<dbReference type="DIP" id="DIP-42480N"/>
<dbReference type="FunCoup" id="O88634">
    <property type="interactions" value="1355"/>
</dbReference>
<dbReference type="IntAct" id="O88634">
    <property type="interactions" value="2"/>
</dbReference>
<dbReference type="MINT" id="O88634"/>
<dbReference type="STRING" id="10090.ENSMUSP00000054426"/>
<dbReference type="BindingDB" id="O88634"/>
<dbReference type="ChEMBL" id="CHEMBL4879420"/>
<dbReference type="GlyCosmos" id="O88634">
    <property type="glycosylation" value="1 site, No reported glycans"/>
</dbReference>
<dbReference type="GlyGen" id="O88634">
    <property type="glycosylation" value="3 sites"/>
</dbReference>
<dbReference type="iPTMnet" id="O88634"/>
<dbReference type="PhosphoSitePlus" id="O88634"/>
<dbReference type="PaxDb" id="10090-ENSMUSP00000054426"/>
<dbReference type="ProteomicsDB" id="287955"/>
<dbReference type="Antibodypedia" id="14245">
    <property type="antibodies" value="401 antibodies from 34 providers"/>
</dbReference>
<dbReference type="DNASU" id="14065"/>
<dbReference type="Ensembl" id="ENSMUST00000058099.9">
    <property type="protein sequence ID" value="ENSMUSP00000054426.9"/>
    <property type="gene ID" value="ENSMUSG00000050147.10"/>
</dbReference>
<dbReference type="GeneID" id="14065"/>
<dbReference type="KEGG" id="mmu:14065"/>
<dbReference type="UCSC" id="uc009mgr.1">
    <property type="organism name" value="mouse"/>
</dbReference>
<dbReference type="AGR" id="MGI:1298207"/>
<dbReference type="CTD" id="9002"/>
<dbReference type="MGI" id="MGI:1298207">
    <property type="gene designation" value="F2rl3"/>
</dbReference>
<dbReference type="VEuPathDB" id="HostDB:ENSMUSG00000050147"/>
<dbReference type="eggNOG" id="ENOG502QU4Y">
    <property type="taxonomic scope" value="Eukaryota"/>
</dbReference>
<dbReference type="GeneTree" id="ENSGT01050000244840"/>
<dbReference type="HOGENOM" id="CLU_009579_8_2_1"/>
<dbReference type="InParanoid" id="O88634"/>
<dbReference type="OMA" id="WGNLYGA"/>
<dbReference type="OrthoDB" id="8716763at2759"/>
<dbReference type="PhylomeDB" id="O88634"/>
<dbReference type="TreeFam" id="TF350010"/>
<dbReference type="Reactome" id="R-MMU-375276">
    <property type="pathway name" value="Peptide ligand-binding receptors"/>
</dbReference>
<dbReference type="Reactome" id="R-MMU-416476">
    <property type="pathway name" value="G alpha (q) signalling events"/>
</dbReference>
<dbReference type="Reactome" id="R-MMU-456926">
    <property type="pathway name" value="Thrombin signalling through proteinase activated receptors (PARs)"/>
</dbReference>
<dbReference type="BioGRID-ORCS" id="14065">
    <property type="hits" value="4 hits in 81 CRISPR screens"/>
</dbReference>
<dbReference type="EvolutionaryTrace" id="O88634"/>
<dbReference type="PRO" id="PR:O88634"/>
<dbReference type="Proteomes" id="UP000000589">
    <property type="component" value="Chromosome 8"/>
</dbReference>
<dbReference type="RNAct" id="O88634">
    <property type="molecule type" value="protein"/>
</dbReference>
<dbReference type="Bgee" id="ENSMUSG00000050147">
    <property type="expression patterns" value="Expressed in left lobe of liver and 67 other cell types or tissues"/>
</dbReference>
<dbReference type="GO" id="GO:0005886">
    <property type="term" value="C:plasma membrane"/>
    <property type="evidence" value="ECO:0007669"/>
    <property type="project" value="UniProtKB-SubCell"/>
</dbReference>
<dbReference type="GO" id="GO:0002020">
    <property type="term" value="F:protease binding"/>
    <property type="evidence" value="ECO:0007669"/>
    <property type="project" value="Ensembl"/>
</dbReference>
<dbReference type="GO" id="GO:0015057">
    <property type="term" value="F:thrombin-activated receptor activity"/>
    <property type="evidence" value="ECO:0007669"/>
    <property type="project" value="InterPro"/>
</dbReference>
<dbReference type="GO" id="GO:0070527">
    <property type="term" value="P:platelet aggregation"/>
    <property type="evidence" value="ECO:0000314"/>
    <property type="project" value="MGI"/>
</dbReference>
<dbReference type="GO" id="GO:0051281">
    <property type="term" value="P:positive regulation of release of sequestered calcium ion into cytosol"/>
    <property type="evidence" value="ECO:0007669"/>
    <property type="project" value="Ensembl"/>
</dbReference>
<dbReference type="CDD" id="cd15372">
    <property type="entry name" value="7tmA_PAR4"/>
    <property type="match status" value="1"/>
</dbReference>
<dbReference type="FunFam" id="1.20.1070.10:FF:000230">
    <property type="entry name" value="F2R-like thrombin or trypsin receptor 3"/>
    <property type="match status" value="1"/>
</dbReference>
<dbReference type="Gene3D" id="1.20.1070.10">
    <property type="entry name" value="Rhodopsin 7-helix transmembrane proteins"/>
    <property type="match status" value="1"/>
</dbReference>
<dbReference type="InterPro" id="IPR000276">
    <property type="entry name" value="GPCR_Rhodpsn"/>
</dbReference>
<dbReference type="InterPro" id="IPR017452">
    <property type="entry name" value="GPCR_Rhodpsn_7TM"/>
</dbReference>
<dbReference type="InterPro" id="IPR003944">
    <property type="entry name" value="Prot_act_rcpt_4"/>
</dbReference>
<dbReference type="InterPro" id="IPR003912">
    <property type="entry name" value="Protea_act_rcpt"/>
</dbReference>
<dbReference type="PANTHER" id="PTHR24232">
    <property type="entry name" value="G-PROTEIN COUPLED RECEPTOR"/>
    <property type="match status" value="1"/>
</dbReference>
<dbReference type="PANTHER" id="PTHR24232:SF22">
    <property type="entry name" value="PROTEINASE-ACTIVATED RECEPTOR 4"/>
    <property type="match status" value="1"/>
</dbReference>
<dbReference type="Pfam" id="PF00001">
    <property type="entry name" value="7tm_1"/>
    <property type="match status" value="1"/>
</dbReference>
<dbReference type="PRINTS" id="PR00237">
    <property type="entry name" value="GPCRRHODOPSN"/>
</dbReference>
<dbReference type="PRINTS" id="PR01428">
    <property type="entry name" value="PROTEASEAR"/>
</dbReference>
<dbReference type="PRINTS" id="PR01430">
    <property type="entry name" value="PROTEASEAR4"/>
</dbReference>
<dbReference type="SUPFAM" id="SSF81321">
    <property type="entry name" value="Family A G protein-coupled receptor-like"/>
    <property type="match status" value="1"/>
</dbReference>
<dbReference type="PROSITE" id="PS00237">
    <property type="entry name" value="G_PROTEIN_RECEP_F1_1"/>
    <property type="match status" value="1"/>
</dbReference>
<dbReference type="PROSITE" id="PS50262">
    <property type="entry name" value="G_PROTEIN_RECEP_F1_2"/>
    <property type="match status" value="1"/>
</dbReference>
<reference key="1">
    <citation type="journal article" date="1998" name="J. Biol. Chem.">
        <title>Gene and locus structure and chromosomal localization of the protease-activated receptor gene family.</title>
        <authorList>
            <person name="Kahn M.L."/>
            <person name="Hammes S.R."/>
            <person name="Botka C."/>
            <person name="Coughlin S.R."/>
        </authorList>
    </citation>
    <scope>NUCLEOTIDE SEQUENCE [MRNA]</scope>
</reference>
<reference key="2">
    <citation type="journal article" date="1998" name="Nature">
        <title>A dual thrombin receptor system for platelet activation.</title>
        <authorList>
            <person name="Kahn M.L."/>
            <person name="Zheng Y.-W."/>
            <person name="Huang W."/>
            <person name="Bigornia V."/>
            <person name="Zeng D."/>
            <person name="Moff S."/>
            <person name="Farese R.V. Jr."/>
            <person name="Tam C."/>
            <person name="Coughlin S.R."/>
        </authorList>
    </citation>
    <scope>NUCLEOTIDE SEQUENCE [MRNA]</scope>
</reference>
<reference key="3">
    <citation type="journal article" date="2005" name="Science">
        <title>The transcriptional landscape of the mammalian genome.</title>
        <authorList>
            <person name="Carninci P."/>
            <person name="Kasukawa T."/>
            <person name="Katayama S."/>
            <person name="Gough J."/>
            <person name="Frith M.C."/>
            <person name="Maeda N."/>
            <person name="Oyama R."/>
            <person name="Ravasi T."/>
            <person name="Lenhard B."/>
            <person name="Wells C."/>
            <person name="Kodzius R."/>
            <person name="Shimokawa K."/>
            <person name="Bajic V.B."/>
            <person name="Brenner S.E."/>
            <person name="Batalov S."/>
            <person name="Forrest A.R."/>
            <person name="Zavolan M."/>
            <person name="Davis M.J."/>
            <person name="Wilming L.G."/>
            <person name="Aidinis V."/>
            <person name="Allen J.E."/>
            <person name="Ambesi-Impiombato A."/>
            <person name="Apweiler R."/>
            <person name="Aturaliya R.N."/>
            <person name="Bailey T.L."/>
            <person name="Bansal M."/>
            <person name="Baxter L."/>
            <person name="Beisel K.W."/>
            <person name="Bersano T."/>
            <person name="Bono H."/>
            <person name="Chalk A.M."/>
            <person name="Chiu K.P."/>
            <person name="Choudhary V."/>
            <person name="Christoffels A."/>
            <person name="Clutterbuck D.R."/>
            <person name="Crowe M.L."/>
            <person name="Dalla E."/>
            <person name="Dalrymple B.P."/>
            <person name="de Bono B."/>
            <person name="Della Gatta G."/>
            <person name="di Bernardo D."/>
            <person name="Down T."/>
            <person name="Engstrom P."/>
            <person name="Fagiolini M."/>
            <person name="Faulkner G."/>
            <person name="Fletcher C.F."/>
            <person name="Fukushima T."/>
            <person name="Furuno M."/>
            <person name="Futaki S."/>
            <person name="Gariboldi M."/>
            <person name="Georgii-Hemming P."/>
            <person name="Gingeras T.R."/>
            <person name="Gojobori T."/>
            <person name="Green R.E."/>
            <person name="Gustincich S."/>
            <person name="Harbers M."/>
            <person name="Hayashi Y."/>
            <person name="Hensch T.K."/>
            <person name="Hirokawa N."/>
            <person name="Hill D."/>
            <person name="Huminiecki L."/>
            <person name="Iacono M."/>
            <person name="Ikeo K."/>
            <person name="Iwama A."/>
            <person name="Ishikawa T."/>
            <person name="Jakt M."/>
            <person name="Kanapin A."/>
            <person name="Katoh M."/>
            <person name="Kawasawa Y."/>
            <person name="Kelso J."/>
            <person name="Kitamura H."/>
            <person name="Kitano H."/>
            <person name="Kollias G."/>
            <person name="Krishnan S.P."/>
            <person name="Kruger A."/>
            <person name="Kummerfeld S.K."/>
            <person name="Kurochkin I.V."/>
            <person name="Lareau L.F."/>
            <person name="Lazarevic D."/>
            <person name="Lipovich L."/>
            <person name="Liu J."/>
            <person name="Liuni S."/>
            <person name="McWilliam S."/>
            <person name="Madan Babu M."/>
            <person name="Madera M."/>
            <person name="Marchionni L."/>
            <person name="Matsuda H."/>
            <person name="Matsuzawa S."/>
            <person name="Miki H."/>
            <person name="Mignone F."/>
            <person name="Miyake S."/>
            <person name="Morris K."/>
            <person name="Mottagui-Tabar S."/>
            <person name="Mulder N."/>
            <person name="Nakano N."/>
            <person name="Nakauchi H."/>
            <person name="Ng P."/>
            <person name="Nilsson R."/>
            <person name="Nishiguchi S."/>
            <person name="Nishikawa S."/>
            <person name="Nori F."/>
            <person name="Ohara O."/>
            <person name="Okazaki Y."/>
            <person name="Orlando V."/>
            <person name="Pang K.C."/>
            <person name="Pavan W.J."/>
            <person name="Pavesi G."/>
            <person name="Pesole G."/>
            <person name="Petrovsky N."/>
            <person name="Piazza S."/>
            <person name="Reed J."/>
            <person name="Reid J.F."/>
            <person name="Ring B.Z."/>
            <person name="Ringwald M."/>
            <person name="Rost B."/>
            <person name="Ruan Y."/>
            <person name="Salzberg S.L."/>
            <person name="Sandelin A."/>
            <person name="Schneider C."/>
            <person name="Schoenbach C."/>
            <person name="Sekiguchi K."/>
            <person name="Semple C.A."/>
            <person name="Seno S."/>
            <person name="Sessa L."/>
            <person name="Sheng Y."/>
            <person name="Shibata Y."/>
            <person name="Shimada H."/>
            <person name="Shimada K."/>
            <person name="Silva D."/>
            <person name="Sinclair B."/>
            <person name="Sperling S."/>
            <person name="Stupka E."/>
            <person name="Sugiura K."/>
            <person name="Sultana R."/>
            <person name="Takenaka Y."/>
            <person name="Taki K."/>
            <person name="Tammoja K."/>
            <person name="Tan S.L."/>
            <person name="Tang S."/>
            <person name="Taylor M.S."/>
            <person name="Tegner J."/>
            <person name="Teichmann S.A."/>
            <person name="Ueda H.R."/>
            <person name="van Nimwegen E."/>
            <person name="Verardo R."/>
            <person name="Wei C.L."/>
            <person name="Yagi K."/>
            <person name="Yamanishi H."/>
            <person name="Zabarovsky E."/>
            <person name="Zhu S."/>
            <person name="Zimmer A."/>
            <person name="Hide W."/>
            <person name="Bult C."/>
            <person name="Grimmond S.M."/>
            <person name="Teasdale R.D."/>
            <person name="Liu E.T."/>
            <person name="Brusic V."/>
            <person name="Quackenbush J."/>
            <person name="Wahlestedt C."/>
            <person name="Mattick J.S."/>
            <person name="Hume D.A."/>
            <person name="Kai C."/>
            <person name="Sasaki D."/>
            <person name="Tomaru Y."/>
            <person name="Fukuda S."/>
            <person name="Kanamori-Katayama M."/>
            <person name="Suzuki M."/>
            <person name="Aoki J."/>
            <person name="Arakawa T."/>
            <person name="Iida J."/>
            <person name="Imamura K."/>
            <person name="Itoh M."/>
            <person name="Kato T."/>
            <person name="Kawaji H."/>
            <person name="Kawagashira N."/>
            <person name="Kawashima T."/>
            <person name="Kojima M."/>
            <person name="Kondo S."/>
            <person name="Konno H."/>
            <person name="Nakano K."/>
            <person name="Ninomiya N."/>
            <person name="Nishio T."/>
            <person name="Okada M."/>
            <person name="Plessy C."/>
            <person name="Shibata K."/>
            <person name="Shiraki T."/>
            <person name="Suzuki S."/>
            <person name="Tagami M."/>
            <person name="Waki K."/>
            <person name="Watahiki A."/>
            <person name="Okamura-Oho Y."/>
            <person name="Suzuki H."/>
            <person name="Kawai J."/>
            <person name="Hayashizaki Y."/>
        </authorList>
    </citation>
    <scope>NUCLEOTIDE SEQUENCE [LARGE SCALE MRNA]</scope>
    <source>
        <strain>C57BL/6J</strain>
        <strain>NOD</strain>
        <tissue>Bone</tissue>
        <tissue>Spleen</tissue>
        <tissue>Thymus</tissue>
    </source>
</reference>
<reference key="4">
    <citation type="submission" date="2005-07" db="EMBL/GenBank/DDBJ databases">
        <authorList>
            <person name="Mural R.J."/>
            <person name="Adams M.D."/>
            <person name="Myers E.W."/>
            <person name="Smith H.O."/>
            <person name="Venter J.C."/>
        </authorList>
    </citation>
    <scope>NUCLEOTIDE SEQUENCE [LARGE SCALE GENOMIC DNA]</scope>
</reference>
<accession>O88634</accession>
<accession>Q8BZ77</accession>
<name>PAR4_MOUSE</name>
<organism>
    <name type="scientific">Mus musculus</name>
    <name type="common">Mouse</name>
    <dbReference type="NCBI Taxonomy" id="10090"/>
    <lineage>
        <taxon>Eukaryota</taxon>
        <taxon>Metazoa</taxon>
        <taxon>Chordata</taxon>
        <taxon>Craniata</taxon>
        <taxon>Vertebrata</taxon>
        <taxon>Euteleostomi</taxon>
        <taxon>Mammalia</taxon>
        <taxon>Eutheria</taxon>
        <taxon>Euarchontoglires</taxon>
        <taxon>Glires</taxon>
        <taxon>Rodentia</taxon>
        <taxon>Myomorpha</taxon>
        <taxon>Muroidea</taxon>
        <taxon>Muridae</taxon>
        <taxon>Murinae</taxon>
        <taxon>Mus</taxon>
        <taxon>Mus</taxon>
    </lineage>
</organism>
<gene>
    <name type="primary">F2rl3</name>
    <name type="synonym">Par4</name>
</gene>
<comment type="function">
    <text>Receptor for activated thrombin or trypsin coupled to G proteins that stimulate phosphoinositide hydrolysis. May play a role in platelets activation.</text>
</comment>
<comment type="subcellular location">
    <subcellularLocation>
        <location>Cell membrane</location>
        <topology>Multi-pass membrane protein</topology>
    </subcellularLocation>
</comment>
<comment type="tissue specificity">
    <text>Highly expressed in the spleen. Slight expression in the heart, lung, skeletal muscle and kidney. No detectable expression in brain, liver or testis. Also detected in platelets.</text>
</comment>
<comment type="PTM">
    <text>A proteolytic cleavage generates a new N-terminus that functions as a tethered ligand.</text>
</comment>
<comment type="similarity">
    <text evidence="3">Belongs to the G-protein coupled receptor 1 family.</text>
</comment>
<protein>
    <recommendedName>
        <fullName>Proteinase-activated receptor 4</fullName>
        <shortName>PAR-4</shortName>
    </recommendedName>
    <alternativeName>
        <fullName>Coagulation factor II receptor-like 3</fullName>
    </alternativeName>
    <alternativeName>
        <fullName>Thrombin receptor-like 3</fullName>
    </alternativeName>
</protein>